<gene>
    <name evidence="1" type="primary">rplF</name>
    <name type="ordered locus">SMGWSS_235</name>
</gene>
<reference key="1">
    <citation type="journal article" date="2007" name="Proc. Natl. Acad. Sci. U.S.A.">
        <title>Parallel genomic evolution and metabolic interdependence in an ancient symbiosis.</title>
        <authorList>
            <person name="McCutcheon J.P."/>
            <person name="Moran N.A."/>
        </authorList>
    </citation>
    <scope>NUCLEOTIDE SEQUENCE [LARGE SCALE GENOMIC DNA]</scope>
    <source>
        <strain>GWSS</strain>
    </source>
</reference>
<comment type="function">
    <text evidence="1">This protein binds to the 23S rRNA, and is important in its secondary structure. It is located near the subunit interface in the base of the L7/L12 stalk, and near the tRNA binding site of the peptidyltransferase center.</text>
</comment>
<comment type="subunit">
    <text evidence="1">Part of the 50S ribosomal subunit.</text>
</comment>
<comment type="similarity">
    <text evidence="1">Belongs to the universal ribosomal protein uL6 family.</text>
</comment>
<organism>
    <name type="scientific">Karelsulcia muelleri (strain GWSS)</name>
    <name type="common">Sulcia muelleri</name>
    <dbReference type="NCBI Taxonomy" id="444179"/>
    <lineage>
        <taxon>Bacteria</taxon>
        <taxon>Pseudomonadati</taxon>
        <taxon>Bacteroidota</taxon>
        <taxon>Flavobacteriia</taxon>
        <taxon>Flavobacteriales</taxon>
        <taxon>Candidatus Karelsulcia</taxon>
    </lineage>
</organism>
<evidence type="ECO:0000255" key="1">
    <source>
        <dbReference type="HAMAP-Rule" id="MF_01365"/>
    </source>
</evidence>
<evidence type="ECO:0000305" key="2"/>
<protein>
    <recommendedName>
        <fullName evidence="1">Large ribosomal subunit protein uL6</fullName>
    </recommendedName>
    <alternativeName>
        <fullName evidence="2">50S ribosomal protein L6</fullName>
    </alternativeName>
</protein>
<sequence length="182" mass="20808">MSRIGNIPVLIPNNVFVKKQDNIIYINGPLGKLNQKIIGDINIIINNNNIIVKRKHNDKKNRALHGLYRMLIYNMIKGVYNGFKKKLELIGVGFRAKNNSNILDLNIGYSHNIIIKLPKSITLEVKMEKNKNTQIILKSYDKQLLGIVAAKIRSLRKPEPYKGKGIRYINEYVIKKTGKSAK</sequence>
<proteinExistence type="inferred from homology"/>
<accession>A8Z681</accession>
<feature type="chain" id="PRO_1000087072" description="Large ribosomal subunit protein uL6">
    <location>
        <begin position="1"/>
        <end position="182"/>
    </location>
</feature>
<name>RL6_KARMG</name>
<dbReference type="EMBL" id="CP000770">
    <property type="protein sequence ID" value="ABS30632.1"/>
    <property type="molecule type" value="Genomic_DNA"/>
</dbReference>
<dbReference type="SMR" id="A8Z681"/>
<dbReference type="STRING" id="444179.SMGWSS_235"/>
<dbReference type="KEGG" id="smg:SMGWSS_235"/>
<dbReference type="HOGENOM" id="CLU_065464_1_2_10"/>
<dbReference type="Proteomes" id="UP000000781">
    <property type="component" value="Chromosome"/>
</dbReference>
<dbReference type="GO" id="GO:0022625">
    <property type="term" value="C:cytosolic large ribosomal subunit"/>
    <property type="evidence" value="ECO:0007669"/>
    <property type="project" value="TreeGrafter"/>
</dbReference>
<dbReference type="GO" id="GO:0019843">
    <property type="term" value="F:rRNA binding"/>
    <property type="evidence" value="ECO:0007669"/>
    <property type="project" value="UniProtKB-UniRule"/>
</dbReference>
<dbReference type="GO" id="GO:0003735">
    <property type="term" value="F:structural constituent of ribosome"/>
    <property type="evidence" value="ECO:0007669"/>
    <property type="project" value="InterPro"/>
</dbReference>
<dbReference type="GO" id="GO:0002181">
    <property type="term" value="P:cytoplasmic translation"/>
    <property type="evidence" value="ECO:0007669"/>
    <property type="project" value="TreeGrafter"/>
</dbReference>
<dbReference type="Gene3D" id="3.90.930.12">
    <property type="entry name" value="Ribosomal protein L6, alpha-beta domain"/>
    <property type="match status" value="2"/>
</dbReference>
<dbReference type="HAMAP" id="MF_01365_B">
    <property type="entry name" value="Ribosomal_uL6_B"/>
    <property type="match status" value="1"/>
</dbReference>
<dbReference type="InterPro" id="IPR000702">
    <property type="entry name" value="Ribosomal_uL6-like"/>
</dbReference>
<dbReference type="InterPro" id="IPR036789">
    <property type="entry name" value="Ribosomal_uL6-like_a/b-dom_sf"/>
</dbReference>
<dbReference type="InterPro" id="IPR020040">
    <property type="entry name" value="Ribosomal_uL6_a/b-dom"/>
</dbReference>
<dbReference type="InterPro" id="IPR019906">
    <property type="entry name" value="Ribosomal_uL6_bac-type"/>
</dbReference>
<dbReference type="InterPro" id="IPR002358">
    <property type="entry name" value="Ribosomal_uL6_CS"/>
</dbReference>
<dbReference type="NCBIfam" id="TIGR03654">
    <property type="entry name" value="L6_bact"/>
    <property type="match status" value="1"/>
</dbReference>
<dbReference type="PANTHER" id="PTHR11655">
    <property type="entry name" value="60S/50S RIBOSOMAL PROTEIN L6/L9"/>
    <property type="match status" value="1"/>
</dbReference>
<dbReference type="PANTHER" id="PTHR11655:SF14">
    <property type="entry name" value="LARGE RIBOSOMAL SUBUNIT PROTEIN UL6M"/>
    <property type="match status" value="1"/>
</dbReference>
<dbReference type="Pfam" id="PF00347">
    <property type="entry name" value="Ribosomal_L6"/>
    <property type="match status" value="2"/>
</dbReference>
<dbReference type="PIRSF" id="PIRSF002162">
    <property type="entry name" value="Ribosomal_L6"/>
    <property type="match status" value="1"/>
</dbReference>
<dbReference type="PRINTS" id="PR00059">
    <property type="entry name" value="RIBOSOMALL6"/>
</dbReference>
<dbReference type="SUPFAM" id="SSF56053">
    <property type="entry name" value="Ribosomal protein L6"/>
    <property type="match status" value="2"/>
</dbReference>
<dbReference type="PROSITE" id="PS00525">
    <property type="entry name" value="RIBOSOMAL_L6_1"/>
    <property type="match status" value="1"/>
</dbReference>
<keyword id="KW-0687">Ribonucleoprotein</keyword>
<keyword id="KW-0689">Ribosomal protein</keyword>
<keyword id="KW-0694">RNA-binding</keyword>
<keyword id="KW-0699">rRNA-binding</keyword>